<proteinExistence type="inferred from homology"/>
<dbReference type="EC" id="7.1.1.2" evidence="1"/>
<dbReference type="EMBL" id="AY504592">
    <property type="protein sequence ID" value="AAS91457.1"/>
    <property type="molecule type" value="Genomic_DNA"/>
</dbReference>
<dbReference type="SMR" id="Q330A0"/>
<dbReference type="GO" id="GO:0005743">
    <property type="term" value="C:mitochondrial inner membrane"/>
    <property type="evidence" value="ECO:0000250"/>
    <property type="project" value="UniProtKB"/>
</dbReference>
<dbReference type="GO" id="GO:0008137">
    <property type="term" value="F:NADH dehydrogenase (ubiquinone) activity"/>
    <property type="evidence" value="ECO:0000250"/>
    <property type="project" value="UniProtKB"/>
</dbReference>
<dbReference type="GO" id="GO:0006120">
    <property type="term" value="P:mitochondrial electron transport, NADH to ubiquinone"/>
    <property type="evidence" value="ECO:0000250"/>
    <property type="project" value="UniProtKB"/>
</dbReference>
<dbReference type="GO" id="GO:0032981">
    <property type="term" value="P:mitochondrial respiratory chain complex I assembly"/>
    <property type="evidence" value="ECO:0000250"/>
    <property type="project" value="UniProtKB"/>
</dbReference>
<dbReference type="InterPro" id="IPR050175">
    <property type="entry name" value="Complex_I_Subunit_2"/>
</dbReference>
<dbReference type="InterPro" id="IPR010933">
    <property type="entry name" value="NADH_DH_su2_C"/>
</dbReference>
<dbReference type="InterPro" id="IPR003917">
    <property type="entry name" value="NADH_UbQ_OxRdtase_chain2"/>
</dbReference>
<dbReference type="InterPro" id="IPR001750">
    <property type="entry name" value="ND/Mrp_TM"/>
</dbReference>
<dbReference type="PANTHER" id="PTHR46552">
    <property type="entry name" value="NADH-UBIQUINONE OXIDOREDUCTASE CHAIN 2"/>
    <property type="match status" value="1"/>
</dbReference>
<dbReference type="PANTHER" id="PTHR46552:SF1">
    <property type="entry name" value="NADH-UBIQUINONE OXIDOREDUCTASE CHAIN 2"/>
    <property type="match status" value="1"/>
</dbReference>
<dbReference type="Pfam" id="PF06444">
    <property type="entry name" value="NADH_dehy_S2_C"/>
    <property type="match status" value="1"/>
</dbReference>
<dbReference type="Pfam" id="PF00361">
    <property type="entry name" value="Proton_antipo_M"/>
    <property type="match status" value="1"/>
</dbReference>
<dbReference type="PRINTS" id="PR01436">
    <property type="entry name" value="NADHDHGNASE2"/>
</dbReference>
<accession>Q330A0</accession>
<gene>
    <name evidence="1" type="primary">MT-ND2</name>
    <name type="synonym">MTND2</name>
    <name type="synonym">NADH2</name>
    <name type="synonym">ND2</name>
</gene>
<sequence>MNPLVFTVIMSTVMLGTAIVATSSHWLMAWIGFEMNMLAVIPILMKKYNPRSMEASTKYFLTQATASMLLMLAVTMNLVYSGQWSVTKPLSPTASTIMTLAMAMKLGLSPFHFWVPEVAQGISLPSGLILLTWQKLAPMSILYQISSTINLDLLMTLSILSIGIGGWGGLNQTQLRKIMAYSSIAHMGWMTTILAYNPTMTLLNLAIYILLTTTTFMMFMLSSTTTTLSLSHTWNKMPLLTTAILLTMLSLGGLPPLSGFMPKWMIIQELTKNDNVILPTMMAVMALLNLYFYMRLTYSTSLTMFPSTNNMKMKWQFNYAKSTTHLSPLIILSTLILPLSPMLALLE</sequence>
<geneLocation type="mitochondrion"/>
<reference key="1">
    <citation type="submission" date="2003-12" db="EMBL/GenBank/DDBJ databases">
        <title>Bats and birds: flying in the face of mtDNA evolutionary rates.</title>
        <authorList>
            <person name="Worthington Wilmer J.M."/>
            <person name="Schneider C.J."/>
            <person name="Sorenson M.D."/>
        </authorList>
    </citation>
    <scope>NUCLEOTIDE SEQUENCE [GENOMIC DNA]</scope>
    <source>
        <strain>Isolate 3</strain>
    </source>
</reference>
<feature type="chain" id="PRO_0000256677" description="NADH-ubiquinone oxidoreductase chain 2">
    <location>
        <begin position="1"/>
        <end position="347"/>
    </location>
</feature>
<feature type="transmembrane region" description="Helical" evidence="3">
    <location>
        <begin position="1"/>
        <end position="21"/>
    </location>
</feature>
<feature type="transmembrane region" description="Helical" evidence="3">
    <location>
        <begin position="25"/>
        <end position="45"/>
    </location>
</feature>
<feature type="transmembrane region" description="Helical" evidence="3">
    <location>
        <begin position="59"/>
        <end position="79"/>
    </location>
</feature>
<feature type="transmembrane region" description="Helical" evidence="3">
    <location>
        <begin position="111"/>
        <end position="131"/>
    </location>
</feature>
<feature type="transmembrane region" description="Helical" evidence="3">
    <location>
        <begin position="149"/>
        <end position="169"/>
    </location>
</feature>
<feature type="transmembrane region" description="Helical" evidence="3">
    <location>
        <begin position="178"/>
        <end position="198"/>
    </location>
</feature>
<feature type="transmembrane region" description="Helical" evidence="3">
    <location>
        <begin position="201"/>
        <end position="221"/>
    </location>
</feature>
<feature type="transmembrane region" description="Helical" evidence="3">
    <location>
        <begin position="237"/>
        <end position="257"/>
    </location>
</feature>
<feature type="transmembrane region" description="Helical" evidence="3">
    <location>
        <begin position="276"/>
        <end position="296"/>
    </location>
</feature>
<feature type="transmembrane region" description="Helical" evidence="3">
    <location>
        <begin position="326"/>
        <end position="346"/>
    </location>
</feature>
<evidence type="ECO:0000250" key="1">
    <source>
        <dbReference type="UniProtKB" id="P03891"/>
    </source>
</evidence>
<evidence type="ECO:0000250" key="2">
    <source>
        <dbReference type="UniProtKB" id="P03892"/>
    </source>
</evidence>
<evidence type="ECO:0000255" key="3"/>
<evidence type="ECO:0000305" key="4"/>
<comment type="function">
    <text evidence="1">Core subunit of the mitochondrial membrane respiratory chain NADH dehydrogenase (Complex I) which catalyzes electron transfer from NADH through the respiratory chain, using ubiquinone as an electron acceptor. Essential for the catalytic activity and assembly of complex I.</text>
</comment>
<comment type="catalytic activity">
    <reaction evidence="1">
        <text>a ubiquinone + NADH + 5 H(+)(in) = a ubiquinol + NAD(+) + 4 H(+)(out)</text>
        <dbReference type="Rhea" id="RHEA:29091"/>
        <dbReference type="Rhea" id="RHEA-COMP:9565"/>
        <dbReference type="Rhea" id="RHEA-COMP:9566"/>
        <dbReference type="ChEBI" id="CHEBI:15378"/>
        <dbReference type="ChEBI" id="CHEBI:16389"/>
        <dbReference type="ChEBI" id="CHEBI:17976"/>
        <dbReference type="ChEBI" id="CHEBI:57540"/>
        <dbReference type="ChEBI" id="CHEBI:57945"/>
        <dbReference type="EC" id="7.1.1.2"/>
    </reaction>
</comment>
<comment type="subunit">
    <text evidence="1 2">Core subunit of respiratory chain NADH dehydrogenase (Complex I) which is composed of 45 different subunits. Interacts with TMEM242 (By similarity).</text>
</comment>
<comment type="subcellular location">
    <subcellularLocation>
        <location evidence="2">Mitochondrion inner membrane</location>
        <topology evidence="3">Multi-pass membrane protein</topology>
    </subcellularLocation>
</comment>
<comment type="similarity">
    <text evidence="4">Belongs to the complex I subunit 2 family.</text>
</comment>
<organism>
    <name type="scientific">Pteropus pumilus</name>
    <name type="common">Little golden-mantled flying fox</name>
    <dbReference type="NCBI Taxonomy" id="161598"/>
    <lineage>
        <taxon>Eukaryota</taxon>
        <taxon>Metazoa</taxon>
        <taxon>Chordata</taxon>
        <taxon>Craniata</taxon>
        <taxon>Vertebrata</taxon>
        <taxon>Euteleostomi</taxon>
        <taxon>Mammalia</taxon>
        <taxon>Eutheria</taxon>
        <taxon>Laurasiatheria</taxon>
        <taxon>Chiroptera</taxon>
        <taxon>Yinpterochiroptera</taxon>
        <taxon>Pteropodoidea</taxon>
        <taxon>Pteropodidae</taxon>
        <taxon>Pteropodinae</taxon>
        <taxon>Pteropus</taxon>
    </lineage>
</organism>
<keyword id="KW-0249">Electron transport</keyword>
<keyword id="KW-0472">Membrane</keyword>
<keyword id="KW-0496">Mitochondrion</keyword>
<keyword id="KW-0999">Mitochondrion inner membrane</keyword>
<keyword id="KW-0520">NAD</keyword>
<keyword id="KW-0679">Respiratory chain</keyword>
<keyword id="KW-1278">Translocase</keyword>
<keyword id="KW-0812">Transmembrane</keyword>
<keyword id="KW-1133">Transmembrane helix</keyword>
<keyword id="KW-0813">Transport</keyword>
<keyword id="KW-0830">Ubiquinone</keyword>
<name>NU2M_PTEPU</name>
<protein>
    <recommendedName>
        <fullName evidence="1">NADH-ubiquinone oxidoreductase chain 2</fullName>
        <ecNumber evidence="1">7.1.1.2</ecNumber>
    </recommendedName>
    <alternativeName>
        <fullName>NADH dehydrogenase subunit 2</fullName>
    </alternativeName>
</protein>